<accession>Q8JMY5</accession>
<gene>
    <name evidence="1" type="primary">X</name>
</gene>
<dbReference type="EMBL" id="AY090460">
    <property type="protein sequence ID" value="AAM09062.1"/>
    <property type="molecule type" value="Genomic_DNA"/>
</dbReference>
<dbReference type="EMBL" id="EF157291">
    <property type="protein sequence ID" value="ABM21476.1"/>
    <property type="molecule type" value="Genomic_DNA"/>
</dbReference>
<dbReference type="EMBL" id="AB179747">
    <property type="protein sequence ID" value="BAD90001.1"/>
    <property type="molecule type" value="Genomic_DNA"/>
</dbReference>
<dbReference type="SMR" id="Q8JMY5"/>
<dbReference type="Proteomes" id="UP000001181">
    <property type="component" value="Segment"/>
</dbReference>
<dbReference type="Proteomes" id="UP000127164">
    <property type="component" value="Genome"/>
</dbReference>
<dbReference type="Proteomes" id="UP000143123">
    <property type="component" value="Genome"/>
</dbReference>
<dbReference type="GO" id="GO:0033650">
    <property type="term" value="C:host cell mitochondrion"/>
    <property type="evidence" value="ECO:0007669"/>
    <property type="project" value="UniProtKB-SubCell"/>
</dbReference>
<dbReference type="GO" id="GO:0042025">
    <property type="term" value="C:host cell nucleus"/>
    <property type="evidence" value="ECO:0007669"/>
    <property type="project" value="UniProtKB-SubCell"/>
</dbReference>
<dbReference type="GO" id="GO:0006351">
    <property type="term" value="P:DNA-templated transcription"/>
    <property type="evidence" value="ECO:0007669"/>
    <property type="project" value="UniProtKB-UniRule"/>
</dbReference>
<dbReference type="GO" id="GO:0085033">
    <property type="term" value="P:symbiont-mediated activation of host NF-kappaB cascade"/>
    <property type="evidence" value="ECO:0007669"/>
    <property type="project" value="UniProtKB-UniRule"/>
</dbReference>
<dbReference type="GO" id="GO:0039592">
    <property type="term" value="P:symbiont-mediated arrest of host cell cycle during G2/M transition"/>
    <property type="evidence" value="ECO:0007669"/>
    <property type="project" value="UniProtKB-UniRule"/>
</dbReference>
<dbReference type="GO" id="GO:0019079">
    <property type="term" value="P:viral genome replication"/>
    <property type="evidence" value="ECO:0007669"/>
    <property type="project" value="UniProtKB-UniRule"/>
</dbReference>
<dbReference type="HAMAP" id="MF_04074">
    <property type="entry name" value="HBV_X"/>
    <property type="match status" value="1"/>
</dbReference>
<dbReference type="InterPro" id="IPR000236">
    <property type="entry name" value="Transactivation_prot_X"/>
</dbReference>
<dbReference type="Pfam" id="PF00739">
    <property type="entry name" value="X"/>
    <property type="match status" value="1"/>
</dbReference>
<reference key="1">
    <citation type="journal article" date="2002" name="J. Gen. Virol.">
        <title>Genotype H: a new Amerindian genotype of hepatitis B virus revealed in Central America.</title>
        <authorList>
            <person name="Arauz-Ruiz P."/>
            <person name="Norder H."/>
            <person name="Robertson B.H."/>
            <person name="Magnius L.O."/>
        </authorList>
    </citation>
    <scope>NUCLEOTIDE SEQUENCE [GENOMIC DNA]</scope>
</reference>
<reference key="2">
    <citation type="submission" date="2006-12" db="EMBL/GenBank/DDBJ databases">
        <title>Acute Hepatitis B Caused by HBV genotype H in Japan.</title>
        <authorList>
            <person name="Tamada Y."/>
            <person name="Yano K."/>
            <person name="Komatsu T."/>
            <person name="Yatsuhashi H."/>
            <person name="Takahashi K."/>
            <person name="Mishiro S."/>
        </authorList>
    </citation>
    <scope>NUCLEOTIDE SEQUENCE [GENOMIC DNA]</scope>
    <source>
        <strain>Isolate B3586-YKH94</strain>
    </source>
</reference>
<reference key="3">
    <citation type="journal article" date="2005" name="J. Gen. Virol.">
        <title>Characterization of genotype H hepatitis B virus strain identified for the first time from a Japanese blood donor by nucleic acid amplification test.</title>
        <authorList>
            <consortium name="JRC NAT Screening Research Group"/>
            <person name="Ohnuma H."/>
            <person name="Yoshikawa A."/>
            <person name="Mizoguchi H."/>
            <person name="Okamoto H."/>
        </authorList>
    </citation>
    <scope>NUCLEOTIDE SEQUENCE [GENOMIC DNA]</scope>
    <source>
        <strain>Isolate HB-JBDH1</strain>
    </source>
</reference>
<reference key="4">
    <citation type="journal article" date="2004" name="J. Virol.">
        <title>The enigmatic X gene of hepatitis B virus.</title>
        <authorList>
            <person name="Bouchard M.J."/>
            <person name="Schneider R.J."/>
        </authorList>
    </citation>
    <scope>REVIEW</scope>
</reference>
<reference key="5">
    <citation type="journal article" date="2006" name="Cancer Sci.">
        <title>Molecular functions and biological roles of hepatitis B virus x protein.</title>
        <authorList>
            <person name="Tang H."/>
            <person name="Oishi N."/>
            <person name="Kaneko S."/>
            <person name="Murakami S."/>
        </authorList>
    </citation>
    <scope>REVIEW</scope>
</reference>
<sequence>MAARLCCQLDPARDVLCLRPVGAESCGRPLSWSLGALPPSSPPAVPADDGSHLSLRGLPACAFSSAGPCALRFTSARRMETTVNAPWNLPTTLHKRTLGLSPRSTTWIEEYIKDCVFKDWEESGEELRLKVFVLGGCRHKLVCSPAPCNFFTSA</sequence>
<comment type="function">
    <text evidence="1">Multifunctional protein that plays a role in silencing host antiviral defenses and promoting viral transcription. Does not seem to be essential for HBV infection. May be directly involved in development of cirrhosis and liver cancer (hepatocellular carcinoma). Most of cytosolic activities involve modulation of cytosolic calcium. The effect on apoptosis is controversial depending on the cell types in which the studies have been conducted. May induce apoptosis by localizing in mitochondria and causing loss of mitochondrial membrane potential. May also modulate apoptosis by binding host CFLAR, a key regulator of the death-inducing signaling complex (DISC). Promotes viral transcription by using the host E3 ubiquitin ligase DDB1 to target the SMC5-SMC6 complex to proteasomal degradation. This host complex would otherwise bind to viral episomal DNA, and prevents its transcription. Moderately stimulates transcription of many different viral and cellular transcription elements. Promoters and enhancers stimulated by HBx contain DNA binding sites for NF-kappa-B, AP-1, AP-2, c-EBP, ATF/CREB, or the calcium-activated factor NF-AT.</text>
</comment>
<comment type="subunit">
    <text evidence="1">May form homodimer. May interact with host CEBPA, CFLAR, CREB1, DDB1, E4F1, HBXIP, HSPD1/HSP60, NFKBIA, POLR2E and SMAD4. Interacts with host SMC5-SMC6 complex and induces its degradation. Interacts with host TRPC4AP; leading to prevent ubiquitination of TRPC4AP. Interacts with host PLSCR1; this interaction promotes ubiquitination and degradation of HBx and impairs HBx-mediated cell proliferation.</text>
</comment>
<comment type="subcellular location">
    <subcellularLocation>
        <location evidence="1">Host cytoplasm</location>
    </subcellularLocation>
    <subcellularLocation>
        <location evidence="1">Host nucleus</location>
    </subcellularLocation>
    <subcellularLocation>
        <location evidence="1">Host mitochondrion</location>
    </subcellularLocation>
    <text evidence="1">Mainly cytoplasmic as only a fraction is detected in the nucleus. In cytoplasm, a minor fraction associates with mitochondria or proteasomes.</text>
</comment>
<comment type="PTM">
    <text evidence="1">A fraction may be phosphorylated in insect cells and HepG2 cells, a human hepatoblastoma cell line. Phosphorylated in vitro by host protein kinase C or mitogen-activated protein kinase. N-acetylated in insect cells.</text>
</comment>
<comment type="similarity">
    <text evidence="1">Belongs to the orthohepadnavirus protein X family.</text>
</comment>
<comment type="caution">
    <text>Transcriptional activities should be taken with a grain of salt. As of 2007, all studies demonstrating in vivo interaction between protein X and transcriptional components were performed with significant overexpression of both proteins and in the absence of viral infection.</text>
</comment>
<proteinExistence type="inferred from homology"/>
<organismHost>
    <name type="scientific">Homo sapiens</name>
    <name type="common">Human</name>
    <dbReference type="NCBI Taxonomy" id="9606"/>
</organismHost>
<organismHost>
    <name type="scientific">Pan troglodytes</name>
    <name type="common">Chimpanzee</name>
    <dbReference type="NCBI Taxonomy" id="9598"/>
</organismHost>
<feature type="chain" id="PRO_0000319922" description="Protein X">
    <location>
        <begin position="1"/>
        <end position="154"/>
    </location>
</feature>
<feature type="region of interest" description="Mitochondrial targeting sequence" evidence="1">
    <location>
        <begin position="68"/>
        <end position="117"/>
    </location>
</feature>
<keyword id="KW-1074">Activation of host NF-kappa-B by virus</keyword>
<keyword id="KW-0010">Activator</keyword>
<keyword id="KW-0053">Apoptosis</keyword>
<keyword id="KW-1035">Host cytoplasm</keyword>
<keyword id="KW-1079">Host G2/M cell cycle arrest by virus</keyword>
<keyword id="KW-1045">Host mitochondrion</keyword>
<keyword id="KW-1048">Host nucleus</keyword>
<keyword id="KW-0945">Host-virus interaction</keyword>
<keyword id="KW-1121">Modulation of host cell cycle by virus</keyword>
<keyword id="KW-0804">Transcription</keyword>
<keyword id="KW-0805">Transcription regulation</keyword>
<name>X_HBVH1</name>
<protein>
    <recommendedName>
        <fullName evidence="1">Protein X</fullName>
    </recommendedName>
    <alternativeName>
        <fullName evidence="1">HBx</fullName>
    </alternativeName>
    <alternativeName>
        <fullName evidence="1">Peptide X</fullName>
    </alternativeName>
    <alternativeName>
        <fullName evidence="1">pX</fullName>
    </alternativeName>
</protein>
<evidence type="ECO:0000255" key="1">
    <source>
        <dbReference type="HAMAP-Rule" id="MF_04074"/>
    </source>
</evidence>
<organism>
    <name type="scientific">Hepatitis B virus genotype H (isolate United States/LAS2523/2002)</name>
    <name type="common">HBV-H</name>
    <dbReference type="NCBI Taxonomy" id="489539"/>
    <lineage>
        <taxon>Viruses</taxon>
        <taxon>Riboviria</taxon>
        <taxon>Pararnavirae</taxon>
        <taxon>Artverviricota</taxon>
        <taxon>Revtraviricetes</taxon>
        <taxon>Blubervirales</taxon>
        <taxon>Hepadnaviridae</taxon>
        <taxon>Orthohepadnavirus</taxon>
        <taxon>Hepatitis B virus</taxon>
        <taxon>hepatitis B virus genotype H</taxon>
    </lineage>
</organism>